<accession>Q9UBH6</accession>
<accession>O95719</accession>
<accession>Q7L8K9</accession>
<accession>Q8IW20</accession>
<accession>Q9NT19</accession>
<accession>Q9UFB9</accession>
<gene>
    <name evidence="14" type="primary">XPR1</name>
    <name evidence="14" type="synonym">SLC53A1</name>
    <name type="synonym">SYG1</name>
    <name type="synonym">X3</name>
</gene>
<feature type="chain" id="PRO_0000315853" description="Solute carrier family 53 member 1">
    <location>
        <begin position="1"/>
        <end position="696"/>
    </location>
</feature>
<feature type="topological domain" description="Cytoplasmic" evidence="7 8 9 10 20 21 22 23 24 25 26 27 28 29 30 31 32 33 34 35 36">
    <location>
        <begin position="1"/>
        <end position="228"/>
    </location>
</feature>
<feature type="transmembrane region" description="Helical; Name=1" evidence="7 8 9 10 20 21 22 23 24 25 26 27 28 29 30 31 32 33 34 35 36">
    <location>
        <begin position="229"/>
        <end position="259"/>
    </location>
</feature>
<feature type="topological domain" description="Extracellular" evidence="7 8 9 10 20 21 22 23 24 25 26 27 28 29 30 31 32 33 34 35 36">
    <location>
        <begin position="260"/>
        <end position="264"/>
    </location>
</feature>
<feature type="transmembrane region" description="Helical; Name=2" evidence="7 8 9 10 20 21 22 23 24 25 26 27 28 29 30 31 32 33 34 35 36">
    <location>
        <begin position="265"/>
        <end position="296"/>
    </location>
</feature>
<feature type="topological domain" description="Cytoplasmic" evidence="7 8 9 10 20 21 22 23 24 25 26 27 28 29 30 31 32 33 34 35 36">
    <location>
        <begin position="297"/>
        <end position="309"/>
    </location>
</feature>
<feature type="transmembrane region" description="Helical; Name=3" evidence="7 8 9 10 20 21 22 23 24 25 26 27 28 29 30 31 32 33 34 35 36">
    <location>
        <begin position="310"/>
        <end position="337"/>
    </location>
</feature>
<feature type="topological domain" description="Extracellular" evidence="7 8 9 10 20 21 22 23 24 25 26 27 28 29 30 31 32 33 34 35 36">
    <location>
        <begin position="338"/>
        <end position="343"/>
    </location>
</feature>
<feature type="transmembrane region" description="Helical; Name=4" evidence="7 8 9 10 20 21 22 23 24 25 26 27 28 29 30 31 32 33 34 35 36">
    <location>
        <begin position="344"/>
        <end position="365"/>
    </location>
</feature>
<feature type="intramembrane region" description="Helical" evidence="7 8 9 10 20 21 22 23 24 25 26 27 28 29 30 31 32 33 34 35 36">
    <location>
        <begin position="366"/>
        <end position="383"/>
    </location>
</feature>
<feature type="topological domain" description="Cytoplasmic" evidence="7 8 9 10 20 21 22 23 24 25 26 27 28 29 30 31 32 33 34 35 36">
    <location>
        <begin position="384"/>
        <end position="388"/>
    </location>
</feature>
<feature type="transmembrane region" description="Discontinuously helical; Name=5" evidence="7 8 9 10 20 21 22 23 24 25 26 27 28 29 30 31 32 33 34 35 36">
    <location>
        <begin position="389"/>
        <end position="422"/>
    </location>
</feature>
<feature type="topological domain" description="Extracellular" evidence="7 8 9 10 20 21 22 23 24 25 26 27 28 29 30 31 32 33 34 35 36">
    <location>
        <begin position="423"/>
        <end position="429"/>
    </location>
</feature>
<feature type="transmembrane region" description="Discontinuously helical; Name=6" evidence="7 8 9 10 20 21 22 23 24 25 26 27 28 29 30 31 32 33 34 35 36">
    <location>
        <begin position="430"/>
        <end position="471"/>
    </location>
</feature>
<feature type="topological domain" description="Cytoplasmic" evidence="7 8 9 10 20 21 22 23 24 25 26 27 28 29 30 31 32 33 34 35 36">
    <location>
        <position position="472"/>
    </location>
</feature>
<feature type="transmembrane region" description="Helical; Name=7" evidence="7 8 9 10 20 21 22 23 24 25 26 27 28 29 30 31 32 33 34 35 36">
    <location>
        <begin position="473"/>
        <end position="503"/>
    </location>
</feature>
<feature type="topological domain" description="Extracellular" evidence="7 8 9 10 20 21 22 23 24 25 26 27 28 29 30 31 32 33 34 35 36">
    <location>
        <begin position="504"/>
        <end position="506"/>
    </location>
</feature>
<feature type="transmembrane region" description="Helical; Name=8" evidence="7 8 9 10 20 21 22 23 24 25 26 27 28 29 30 31 32 33 34 35 36">
    <location>
        <begin position="507"/>
        <end position="534"/>
    </location>
</feature>
<feature type="topological domain" description="Cytoplasmic" evidence="7 8 9 10 20 21 22 23 24 25 26 27 28 29 30 31 32 33 34 35 36">
    <location>
        <begin position="535"/>
        <end position="553"/>
    </location>
</feature>
<feature type="transmembrane region" description="Discontinuously helical; Name=9" evidence="7 8 9 10 20 21 22 23 24 25 26 27 28 29 30 31 32 33 34 35 36">
    <location>
        <begin position="554"/>
        <end position="585"/>
    </location>
</feature>
<feature type="topological domain" description="Extracellular" evidence="7 8 9 10 20 21 22 23 24 25 26 27 28 29 30 31 32 33 34 35 36">
    <location>
        <begin position="586"/>
        <end position="587"/>
    </location>
</feature>
<feature type="transmembrane region" description="Helical; Name=10" evidence="7 8 9 10 20 21 22 23 24 25 26 27 28 29 30 31 32 33 34 35 36">
    <location>
        <begin position="588"/>
        <end position="626"/>
    </location>
</feature>
<feature type="topological domain" description="Cytoplasmic" evidence="7 8 9 10 20 21 22 23 24 25 26 27 28 29 30 31 32 33 34 35 36">
    <location>
        <begin position="627"/>
        <end position="696"/>
    </location>
</feature>
<feature type="domain" description="SPX" evidence="7 8 20 22 23 27 28 32">
    <location>
        <begin position="2"/>
        <end position="224"/>
    </location>
</feature>
<feature type="domain" description="EXS" evidence="1">
    <location>
        <begin position="439"/>
        <end position="643"/>
    </location>
</feature>
<feature type="region of interest" description="Important for inositol polyphosphate binding" evidence="7 8">
    <location>
        <begin position="158"/>
        <end position="165"/>
    </location>
</feature>
<feature type="region of interest" description="Disordered" evidence="2">
    <location>
        <begin position="673"/>
        <end position="696"/>
    </location>
</feature>
<feature type="binding site" evidence="7 9 10 20 31 35">
    <location>
        <position position="398"/>
    </location>
    <ligand>
        <name>phosphate</name>
        <dbReference type="ChEBI" id="CHEBI:43474"/>
    </ligand>
</feature>
<feature type="binding site" evidence="7 9 10 20 22 30 31 35">
    <location>
        <position position="401"/>
    </location>
    <ligand>
        <name>phosphate</name>
        <dbReference type="ChEBI" id="CHEBI:43474"/>
    </ligand>
</feature>
<feature type="binding site" evidence="7 9 10 20 22 30 31 35">
    <location>
        <position position="482"/>
    </location>
    <ligand>
        <name>phosphate</name>
        <dbReference type="ChEBI" id="CHEBI:43474"/>
    </ligand>
</feature>
<feature type="binding site" evidence="7 9 10 20 22 30 31 35">
    <location>
        <position position="483"/>
    </location>
    <ligand>
        <name>phosphate</name>
        <dbReference type="ChEBI" id="CHEBI:43474"/>
    </ligand>
</feature>
<feature type="binding site" evidence="7 9 10 20 22 30 31 35">
    <location>
        <position position="570"/>
    </location>
    <ligand>
        <name>phosphate</name>
        <dbReference type="ChEBI" id="CHEBI:43474"/>
    </ligand>
</feature>
<feature type="binding site" evidence="7 9 10 20 22 31 35">
    <location>
        <position position="603"/>
    </location>
    <ligand>
        <name>phosphate</name>
        <dbReference type="ChEBI" id="CHEBI:43474"/>
    </ligand>
</feature>
<feature type="binding site" evidence="7 9 10 20 22 30 31 35">
    <location>
        <position position="604"/>
    </location>
    <ligand>
        <name>phosphate</name>
        <dbReference type="ChEBI" id="CHEBI:43474"/>
    </ligand>
</feature>
<feature type="site" description="Gating residue for phosphate transport" evidence="7 8 9 10">
    <location>
        <position position="573"/>
    </location>
</feature>
<feature type="modified residue" description="Phosphoserine" evidence="38 40">
    <location>
        <position position="668"/>
    </location>
</feature>
<feature type="modified residue" description="Phosphothreonine" evidence="37 38 39">
    <location>
        <position position="690"/>
    </location>
</feature>
<feature type="splice variant" id="VSP_030748" description="In isoform 2." evidence="13">
    <location>
        <begin position="437"/>
        <end position="501"/>
    </location>
</feature>
<feature type="sequence variant" id="VAR_073840" description="In IBGC6; phosphate efflux is impaired; present at the plasma membrane; dbSNP:rs786205902." evidence="4">
    <original>S</original>
    <variation>N</variation>
    <location>
        <position position="136"/>
    </location>
</feature>
<feature type="sequence variant" id="VAR_073841" description="In IBGC6; phosphate efflux is impaired; present at the plasma membrane; dbSNP:rs786205903." evidence="4">
    <original>L</original>
    <variation>P</variation>
    <location>
        <position position="140"/>
    </location>
</feature>
<feature type="sequence variant" id="VAR_073842" description="In IBGC6; dominant negative; phosphate efflux is impaired; loss of localization to the plasma membrane; dbSNP:rs786205901." evidence="4">
    <original>L</original>
    <variation>P</variation>
    <location>
        <position position="145"/>
    </location>
</feature>
<feature type="sequence variant" id="VAR_073843" description="In IBGC6; phosphate efflux is impaired; present at the plasma membrane; dbSNP:rs786205904." evidence="4">
    <original>L</original>
    <variation>S</variation>
    <location>
        <position position="218"/>
    </location>
</feature>
<feature type="sequence variant" id="VAR_087987" description="In IBGC6; phosphate efflux is decreased; present at the plasma membrane." evidence="6">
    <original>R</original>
    <variation>C</variation>
    <location>
        <position position="459"/>
    </location>
</feature>
<feature type="sequence variant" id="VAR_038350" description="In dbSNP:rs1061012." evidence="12">
    <original>T</original>
    <variation>A</variation>
    <location>
        <position position="491"/>
    </location>
</feature>
<feature type="sequence variant" id="VAR_087988" description="In IBGC6; phosphate efflux is impaired; present at the plasma membrane." evidence="6">
    <original>N</original>
    <variation>D</variation>
    <location>
        <position position="619"/>
    </location>
</feature>
<feature type="sequence variant" id="VAR_087989" description="In IBGC6; phosphate efflux is decreased; present at the plasma membrane." evidence="6">
    <original>I</original>
    <variation>S</variation>
    <location>
        <position position="629"/>
    </location>
</feature>
<feature type="mutagenesis site" description="Decreases phosphate efflux." evidence="7">
    <original>Y</original>
    <variation>A</variation>
    <location>
        <position position="22"/>
    </location>
</feature>
<feature type="mutagenesis site" description="Decreases phosphate efflux. Decreases phosphate efflux; when associated with A-161 and A-165." evidence="7 10">
    <original>K</original>
    <variation>A</variation>
    <location>
        <position position="158"/>
    </location>
</feature>
<feature type="mutagenesis site" description="Decreases phosphate efflux; when associated with A-158 and A-165." evidence="10">
    <original>K</original>
    <variation>A</variation>
    <location>
        <position position="161"/>
    </location>
</feature>
<feature type="mutagenesis site" description="Decreases phosphate efflux; when associated with A-158 and A-161." evidence="10">
    <original>K</original>
    <variation>A</variation>
    <location>
        <position position="165"/>
    </location>
</feature>
<feature type="mutagenesis site" description="Increases phosphate efflux; when associated with E-219." evidence="8">
    <original>R</original>
    <variation>E</variation>
    <location>
        <position position="211"/>
    </location>
</feature>
<feature type="mutagenesis site" description="Increases phosphate efflux; when associated with E-211." evidence="8">
    <original>R</original>
    <variation>E</variation>
    <location>
        <position position="219"/>
    </location>
</feature>
<feature type="mutagenesis site" description="Decreases phosphate efflux." evidence="10">
    <original>F</original>
    <variation>G</variation>
    <location>
        <position position="235"/>
    </location>
</feature>
<feature type="mutagenesis site" description="Monomeric; decreases phosphate efflux." evidence="7">
    <original>G</original>
    <variation>F</variation>
    <location>
        <position position="238"/>
    </location>
</feature>
<feature type="mutagenesis site" description="Decreases phosphate efflux." evidence="10">
    <original>L</original>
    <variation>G</variation>
    <location>
        <position position="239"/>
    </location>
</feature>
<feature type="mutagenesis site" description="Monomeric; decreases phosphate efflux." evidence="7">
    <original>G</original>
    <variation>F</variation>
    <location>
        <position position="242"/>
    </location>
</feature>
<feature type="mutagenesis site" description="Decreases phosphate efflux." evidence="7 9">
    <original>R</original>
    <variation>A</variation>
    <location>
        <position position="270"/>
    </location>
</feature>
<feature type="mutagenesis site" description="Decreases phosphate efflux." evidence="7">
    <original>R</original>
    <variation>A</variation>
    <location>
        <position position="273"/>
    </location>
</feature>
<feature type="mutagenesis site" description="Increases phosphate efflux." evidence="7">
    <original>F</original>
    <variation>A</variation>
    <location>
        <position position="394"/>
    </location>
</feature>
<feature type="mutagenesis site" description="Decreases phosphate efflux." evidence="7">
    <original>D</original>
    <variation>A</variation>
    <location>
        <position position="398"/>
    </location>
</feature>
<feature type="mutagenesis site" description="Decreases phosphate efflux." evidence="9">
    <original>N</original>
    <variation>A</variation>
    <location>
        <position position="401"/>
    </location>
</feature>
<feature type="mutagenesis site" description="Decreases phosphate efflux." evidence="9">
    <original>R</original>
    <variation>A</variation>
    <location>
        <position position="448"/>
    </location>
</feature>
<feature type="mutagenesis site" description="Decreases phosphate efflux." evidence="9">
    <original>Q</original>
    <variation>A</variation>
    <location>
        <position position="452"/>
    </location>
</feature>
<feature type="mutagenesis site" description="Decreases phosphate efflux." evidence="7 9">
    <original>R</original>
    <variation>A</variation>
    <variation>C</variation>
    <location>
        <position position="459"/>
    </location>
</feature>
<feature type="mutagenesis site" description="Increases phosphate efflux." evidence="7">
    <original>R</original>
    <variation>A</variation>
    <location>
        <position position="466"/>
    </location>
</feature>
<feature type="mutagenesis site" description="Decreases phosphate efflux." evidence="8 10">
    <original>K</original>
    <variation>A</variation>
    <location>
        <position position="482"/>
    </location>
</feature>
<feature type="mutagenesis site" description="Decreases phosphate efflux." evidence="9">
    <original>Y</original>
    <variation>F</variation>
    <location>
        <position position="483"/>
    </location>
</feature>
<feature type="mutagenesis site" description="Decreases phosphate efflux. Decreases phosphate efflux; when associated with C-582." evidence="7">
    <original>S</original>
    <variation>C</variation>
    <location>
        <position position="497"/>
    </location>
</feature>
<feature type="mutagenesis site" description="Decreases phosphate efflux." evidence="7">
    <original>D</original>
    <variation>A</variation>
    <location>
        <position position="533"/>
    </location>
</feature>
<feature type="mutagenesis site" description="Decreases phosphate efflux." evidence="7 8 9 10">
    <original>R</original>
    <variation>A</variation>
    <variation>C</variation>
    <variation>L</variation>
    <location>
        <position position="570"/>
    </location>
</feature>
<feature type="mutagenesis site" description="Decreases phosphate efflux." evidence="7 8 9 10">
    <original>W</original>
    <variation>A</variation>
    <variation>F</variation>
    <variation>G</variation>
    <variation>L</variation>
    <variation>N</variation>
    <variation>Y</variation>
    <location>
        <position position="573"/>
    </location>
</feature>
<feature type="mutagenesis site" description="Decreases phosphate efflux." evidence="9">
    <original>Q</original>
    <variation>A</variation>
    <location>
        <position position="576"/>
    </location>
</feature>
<feature type="mutagenesis site" description="Decreases phosphate efflux. Decreases phosphate efflux; when associated with C-497." evidence="7">
    <original>T</original>
    <variation>C</variation>
    <location>
        <position position="582"/>
    </location>
</feature>
<feature type="mutagenesis site" description="Decreases phosphate efflux." evidence="9">
    <original>E</original>
    <variation>A</variation>
    <location>
        <position position="600"/>
    </location>
</feature>
<feature type="mutagenesis site" description="Decreases phosphate efflux." evidence="7 8 9 10">
    <original>R</original>
    <variation>A</variation>
    <location>
        <position position="603"/>
    </location>
</feature>
<feature type="mutagenesis site" description="Decreases phosphate efflux." evidence="7 8 10">
    <original>R</original>
    <variation>A</variation>
    <location>
        <position position="604"/>
    </location>
</feature>
<feature type="mutagenesis site" description="Increases phosphate efflux." evidence="7">
    <original>R</original>
    <variation>A</variation>
    <location>
        <position position="611"/>
    </location>
</feature>
<feature type="mutagenesis site" description="Loss of localization to the plasma membrane." evidence="6">
    <location>
        <begin position="612"/>
        <end position="696"/>
    </location>
</feature>
<feature type="mutagenesis site" description="Increases phosphate efflux." evidence="7">
    <original>F</original>
    <variation>A</variation>
    <location>
        <position position="623"/>
    </location>
</feature>
<feature type="helix" evidence="42">
    <location>
        <begin position="4"/>
        <end position="10"/>
    </location>
</feature>
<feature type="helix" evidence="42">
    <location>
        <begin position="13"/>
        <end position="18"/>
    </location>
</feature>
<feature type="helix" evidence="42">
    <location>
        <begin position="22"/>
        <end position="34"/>
    </location>
</feature>
<feature type="turn" evidence="42">
    <location>
        <begin position="39"/>
        <end position="41"/>
    </location>
</feature>
<feature type="helix" evidence="42">
    <location>
        <begin position="44"/>
        <end position="94"/>
    </location>
</feature>
<feature type="helix" evidence="41">
    <location>
        <begin position="119"/>
        <end position="122"/>
    </location>
</feature>
<feature type="helix" evidence="42">
    <location>
        <begin position="130"/>
        <end position="167"/>
    </location>
</feature>
<feature type="helix" evidence="42">
    <location>
        <begin position="171"/>
        <end position="178"/>
    </location>
</feature>
<feature type="turn" evidence="42">
    <location>
        <begin position="179"/>
        <end position="182"/>
    </location>
</feature>
<feature type="helix" evidence="42">
    <location>
        <begin position="184"/>
        <end position="187"/>
    </location>
</feature>
<feature type="helix" evidence="42">
    <location>
        <begin position="190"/>
        <end position="199"/>
    </location>
</feature>
<feature type="turn" evidence="44">
    <location>
        <begin position="206"/>
        <end position="209"/>
    </location>
</feature>
<feature type="helix" evidence="45">
    <location>
        <begin position="211"/>
        <end position="218"/>
    </location>
</feature>
<feature type="helix" evidence="43">
    <location>
        <begin position="231"/>
        <end position="257"/>
    </location>
</feature>
<feature type="strand" evidence="43">
    <location>
        <begin position="261"/>
        <end position="263"/>
    </location>
</feature>
<feature type="helix" evidence="43">
    <location>
        <begin position="266"/>
        <end position="295"/>
    </location>
</feature>
<feature type="helix" evidence="43">
    <location>
        <begin position="299"/>
        <end position="302"/>
    </location>
</feature>
<feature type="strand" evidence="43">
    <location>
        <begin position="307"/>
        <end position="309"/>
    </location>
</feature>
<feature type="helix" evidence="43">
    <location>
        <begin position="313"/>
        <end position="335"/>
    </location>
</feature>
<feature type="helix" evidence="46">
    <location>
        <begin position="337"/>
        <end position="339"/>
    </location>
</feature>
<feature type="strand" evidence="43">
    <location>
        <begin position="340"/>
        <end position="342"/>
    </location>
</feature>
<feature type="helix" evidence="43">
    <location>
        <begin position="346"/>
        <end position="360"/>
    </location>
</feature>
<feature type="helix" evidence="43">
    <location>
        <begin position="368"/>
        <end position="382"/>
    </location>
</feature>
<feature type="turn" evidence="45">
    <location>
        <begin position="383"/>
        <end position="386"/>
    </location>
</feature>
<feature type="helix" evidence="43">
    <location>
        <begin position="391"/>
        <end position="402"/>
    </location>
</feature>
<feature type="helix" evidence="43">
    <location>
        <begin position="404"/>
        <end position="419"/>
    </location>
</feature>
<feature type="strand" evidence="43">
    <location>
        <begin position="423"/>
        <end position="425"/>
    </location>
</feature>
<feature type="strand" evidence="43">
    <location>
        <begin position="439"/>
        <end position="441"/>
    </location>
</feature>
<feature type="strand" evidence="44">
    <location>
        <begin position="444"/>
        <end position="446"/>
    </location>
</feature>
<feature type="helix" evidence="43">
    <location>
        <begin position="447"/>
        <end position="452"/>
    </location>
</feature>
<feature type="helix" evidence="43">
    <location>
        <begin position="454"/>
        <end position="470"/>
    </location>
</feature>
<feature type="helix" evidence="43">
    <location>
        <begin position="473"/>
        <end position="501"/>
    </location>
</feature>
<feature type="helix" evidence="43">
    <location>
        <begin position="507"/>
        <end position="532"/>
    </location>
</feature>
<feature type="strand" evidence="46">
    <location>
        <begin position="544"/>
        <end position="547"/>
    </location>
</feature>
<feature type="strand" evidence="45">
    <location>
        <begin position="552"/>
        <end position="554"/>
    </location>
</feature>
<feature type="helix" evidence="43">
    <location>
        <begin position="556"/>
        <end position="580"/>
    </location>
</feature>
<feature type="turn" evidence="43">
    <location>
        <begin position="587"/>
        <end position="589"/>
    </location>
</feature>
<feature type="helix" evidence="43">
    <location>
        <begin position="590"/>
        <end position="616"/>
    </location>
</feature>
<feature type="helix" evidence="45">
    <location>
        <begin position="617"/>
        <end position="619"/>
    </location>
</feature>
<feature type="turn" evidence="45">
    <location>
        <begin position="620"/>
        <end position="623"/>
    </location>
</feature>
<sequence length="696" mass="81535">MKFAEHLSAHITPEWRKQYIQYEAFKDMLYSAQDQAPSVEVTDEDTVKRYFAKFEEKFFQTCEKELAKINTFYSEKLAEAQRRFATLQNELQSSLDAQKESTGVTTLRQRRKPVFHLSHEERVQHRNIKDLKLAFSEFYLSLILLQNYQNLNFTGFRKILKKHDKILETSRGADWRVAHVEVAPFYTCKKINQLISETEAVVTNELEDGDRQKAMKRLRVPPLGAAQPAPAWTTFRVGLFCGIFIVLNITLVLAAVFKLETDRSIWPLIRIYRGGFLLIEFLFLLGINTYGWRQAGVNHVLIFELNPRSNLSHQHLFEIAGFLGILWCLSLLACFFAPISVIPTYVYPLALYGFMVFFLINPTKTFYYKSRFWLLKLLFRVFTAPFHKVGFADFWLADQLNSLSVILMDLEYMICFYSLELKWDESKGLLPNNSEESGICHKYTYGVRAIVQCIPAWLRFIQCLRRYRDTKRAFPHLVNAGKYSTTFFMVTFAALYSTHKERGHSDTMVFFYLWIVFYIISSCYTLIWDLKMDWGLFDKNAGENTFLREEIVYPQKAYYYCAIIEDVILRFAWTIQISITSTTLLPHSGDIIATVFAPLEVFRRFVWNFFRLENEHLNNCGEFRAVRDISVAPLNADDQTLLEQMMDQDDGVRNRQKNRSWKYNQSISLRRPRLASQSKARDTKVLIEDTDDEANT</sequence>
<reference key="1">
    <citation type="journal article" date="1999" name="Nat. Genet.">
        <title>Receptors for polytropic and xenotropic mouse leukaemia viruses encoded by a single gene at Rmc1.</title>
        <authorList>
            <person name="Yang Y.-L."/>
            <person name="Guo L."/>
            <person name="Xu S."/>
            <person name="Holland C.A."/>
            <person name="Kitamura T."/>
            <person name="Hunter K."/>
            <person name="Cunningham J.M."/>
        </authorList>
    </citation>
    <scope>NUCLEOTIDE SEQUENCE [MRNA] (ISOFORM 1)</scope>
</reference>
<reference key="2">
    <citation type="journal article" date="1999" name="Proc. Natl. Acad. Sci. U.S.A.">
        <title>Cloning and characterization of a cell surface receptor for xenotropic and polytropic murine leukemia viruses.</title>
        <authorList>
            <person name="Tailor C.S."/>
            <person name="Nouri A."/>
            <person name="Lee C.G."/>
            <person name="Kozak C."/>
            <person name="Kabat D."/>
        </authorList>
    </citation>
    <scope>NUCLEOTIDE SEQUENCE [MRNA] (ISOFORM 1)</scope>
    <scope>TISSUE SPECIFICITY</scope>
    <scope>DEVELOPMENTAL STAGE</scope>
    <source>
        <tissue>Lymphocyte</tissue>
    </source>
</reference>
<reference key="3">
    <citation type="journal article" date="1999" name="Proc. Natl. Acad. Sci. U.S.A.">
        <title>A human cell-surface receptor for xenotropic and polytropic murine leukemia viruses: possible role in G protein-coupled signal transduction.</title>
        <authorList>
            <person name="Battini J.-L."/>
            <person name="Rasko J.E.J."/>
            <person name="Miller A.D."/>
        </authorList>
    </citation>
    <scope>NUCLEOTIDE SEQUENCE [MRNA] (ISOFORM 1)</scope>
    <scope>TISSUE SPECIFICITY</scope>
    <scope>DEVELOPMENTAL STAGE</scope>
    <scope>VARIANT ALA-491</scope>
    <source>
        <tissue>Cervix carcinoma</tissue>
    </source>
</reference>
<reference key="4">
    <citation type="journal article" date="2006" name="Nature">
        <title>The DNA sequence and biological annotation of human chromosome 1.</title>
        <authorList>
            <person name="Gregory S.G."/>
            <person name="Barlow K.F."/>
            <person name="McLay K.E."/>
            <person name="Kaul R."/>
            <person name="Swarbreck D."/>
            <person name="Dunham A."/>
            <person name="Scott C.E."/>
            <person name="Howe K.L."/>
            <person name="Woodfine K."/>
            <person name="Spencer C.C.A."/>
            <person name="Jones M.C."/>
            <person name="Gillson C."/>
            <person name="Searle S."/>
            <person name="Zhou Y."/>
            <person name="Kokocinski F."/>
            <person name="McDonald L."/>
            <person name="Evans R."/>
            <person name="Phillips K."/>
            <person name="Atkinson A."/>
            <person name="Cooper R."/>
            <person name="Jones C."/>
            <person name="Hall R.E."/>
            <person name="Andrews T.D."/>
            <person name="Lloyd C."/>
            <person name="Ainscough R."/>
            <person name="Almeida J.P."/>
            <person name="Ambrose K.D."/>
            <person name="Anderson F."/>
            <person name="Andrew R.W."/>
            <person name="Ashwell R.I.S."/>
            <person name="Aubin K."/>
            <person name="Babbage A.K."/>
            <person name="Bagguley C.L."/>
            <person name="Bailey J."/>
            <person name="Beasley H."/>
            <person name="Bethel G."/>
            <person name="Bird C.P."/>
            <person name="Bray-Allen S."/>
            <person name="Brown J.Y."/>
            <person name="Brown A.J."/>
            <person name="Buckley D."/>
            <person name="Burton J."/>
            <person name="Bye J."/>
            <person name="Carder C."/>
            <person name="Chapman J.C."/>
            <person name="Clark S.Y."/>
            <person name="Clarke G."/>
            <person name="Clee C."/>
            <person name="Cobley V."/>
            <person name="Collier R.E."/>
            <person name="Corby N."/>
            <person name="Coville G.J."/>
            <person name="Davies J."/>
            <person name="Deadman R."/>
            <person name="Dunn M."/>
            <person name="Earthrowl M."/>
            <person name="Ellington A.G."/>
            <person name="Errington H."/>
            <person name="Frankish A."/>
            <person name="Frankland J."/>
            <person name="French L."/>
            <person name="Garner P."/>
            <person name="Garnett J."/>
            <person name="Gay L."/>
            <person name="Ghori M.R.J."/>
            <person name="Gibson R."/>
            <person name="Gilby L.M."/>
            <person name="Gillett W."/>
            <person name="Glithero R.J."/>
            <person name="Grafham D.V."/>
            <person name="Griffiths C."/>
            <person name="Griffiths-Jones S."/>
            <person name="Grocock R."/>
            <person name="Hammond S."/>
            <person name="Harrison E.S.I."/>
            <person name="Hart E."/>
            <person name="Haugen E."/>
            <person name="Heath P.D."/>
            <person name="Holmes S."/>
            <person name="Holt K."/>
            <person name="Howden P.J."/>
            <person name="Hunt A.R."/>
            <person name="Hunt S.E."/>
            <person name="Hunter G."/>
            <person name="Isherwood J."/>
            <person name="James R."/>
            <person name="Johnson C."/>
            <person name="Johnson D."/>
            <person name="Joy A."/>
            <person name="Kay M."/>
            <person name="Kershaw J.K."/>
            <person name="Kibukawa M."/>
            <person name="Kimberley A.M."/>
            <person name="King A."/>
            <person name="Knights A.J."/>
            <person name="Lad H."/>
            <person name="Laird G."/>
            <person name="Lawlor S."/>
            <person name="Leongamornlert D.A."/>
            <person name="Lloyd D.M."/>
            <person name="Loveland J."/>
            <person name="Lovell J."/>
            <person name="Lush M.J."/>
            <person name="Lyne R."/>
            <person name="Martin S."/>
            <person name="Mashreghi-Mohammadi M."/>
            <person name="Matthews L."/>
            <person name="Matthews N.S.W."/>
            <person name="McLaren S."/>
            <person name="Milne S."/>
            <person name="Mistry S."/>
            <person name="Moore M.J.F."/>
            <person name="Nickerson T."/>
            <person name="O'Dell C.N."/>
            <person name="Oliver K."/>
            <person name="Palmeiri A."/>
            <person name="Palmer S.A."/>
            <person name="Parker A."/>
            <person name="Patel D."/>
            <person name="Pearce A.V."/>
            <person name="Peck A.I."/>
            <person name="Pelan S."/>
            <person name="Phelps K."/>
            <person name="Phillimore B.J."/>
            <person name="Plumb R."/>
            <person name="Rajan J."/>
            <person name="Raymond C."/>
            <person name="Rouse G."/>
            <person name="Saenphimmachak C."/>
            <person name="Sehra H.K."/>
            <person name="Sheridan E."/>
            <person name="Shownkeen R."/>
            <person name="Sims S."/>
            <person name="Skuce C.D."/>
            <person name="Smith M."/>
            <person name="Steward C."/>
            <person name="Subramanian S."/>
            <person name="Sycamore N."/>
            <person name="Tracey A."/>
            <person name="Tromans A."/>
            <person name="Van Helmond Z."/>
            <person name="Wall M."/>
            <person name="Wallis J.M."/>
            <person name="White S."/>
            <person name="Whitehead S.L."/>
            <person name="Wilkinson J.E."/>
            <person name="Willey D.L."/>
            <person name="Williams H."/>
            <person name="Wilming L."/>
            <person name="Wray P.W."/>
            <person name="Wu Z."/>
            <person name="Coulson A."/>
            <person name="Vaudin M."/>
            <person name="Sulston J.E."/>
            <person name="Durbin R.M."/>
            <person name="Hubbard T."/>
            <person name="Wooster R."/>
            <person name="Dunham I."/>
            <person name="Carter N.P."/>
            <person name="McVean G."/>
            <person name="Ross M.T."/>
            <person name="Harrow J."/>
            <person name="Olson M.V."/>
            <person name="Beck S."/>
            <person name="Rogers J."/>
            <person name="Bentley D.R."/>
        </authorList>
    </citation>
    <scope>NUCLEOTIDE SEQUENCE [LARGE SCALE GENOMIC DNA]</scope>
</reference>
<reference key="5">
    <citation type="submission" date="2007-07" db="EMBL/GenBank/DDBJ databases">
        <authorList>
            <person name="Mural R.J."/>
            <person name="Istrail S."/>
            <person name="Sutton G.G."/>
            <person name="Florea L."/>
            <person name="Halpern A.L."/>
            <person name="Mobarry C.M."/>
            <person name="Lippert R."/>
            <person name="Walenz B."/>
            <person name="Shatkay H."/>
            <person name="Dew I."/>
            <person name="Miller J.R."/>
            <person name="Flanigan M.J."/>
            <person name="Edwards N.J."/>
            <person name="Bolanos R."/>
            <person name="Fasulo D."/>
            <person name="Halldorsson B.V."/>
            <person name="Hannenhalli S."/>
            <person name="Turner R."/>
            <person name="Yooseph S."/>
            <person name="Lu F."/>
            <person name="Nusskern D.R."/>
            <person name="Shue B.C."/>
            <person name="Zheng X.H."/>
            <person name="Zhong F."/>
            <person name="Delcher A.L."/>
            <person name="Huson D.H."/>
            <person name="Kravitz S.A."/>
            <person name="Mouchard L."/>
            <person name="Reinert K."/>
            <person name="Remington K.A."/>
            <person name="Clark A.G."/>
            <person name="Waterman M.S."/>
            <person name="Eichler E.E."/>
            <person name="Adams M.D."/>
            <person name="Hunkapiller M.W."/>
            <person name="Myers E.W."/>
            <person name="Venter J.C."/>
        </authorList>
    </citation>
    <scope>NUCLEOTIDE SEQUENCE [LARGE SCALE GENOMIC DNA]</scope>
</reference>
<reference key="6">
    <citation type="journal article" date="2004" name="Genome Res.">
        <title>The status, quality, and expansion of the NIH full-length cDNA project: the Mammalian Gene Collection (MGC).</title>
        <authorList>
            <consortium name="The MGC Project Team"/>
        </authorList>
    </citation>
    <scope>NUCLEOTIDE SEQUENCE [LARGE SCALE MRNA] (ISOFORM 2)</scope>
    <source>
        <tissue>Testis</tissue>
    </source>
</reference>
<reference key="7">
    <citation type="journal article" date="2007" name="BMC Genomics">
        <title>The full-ORF clone resource of the German cDNA consortium.</title>
        <authorList>
            <person name="Bechtel S."/>
            <person name="Rosenfelder H."/>
            <person name="Duda A."/>
            <person name="Schmidt C.P."/>
            <person name="Ernst U."/>
            <person name="Wellenreuther R."/>
            <person name="Mehrle A."/>
            <person name="Schuster C."/>
            <person name="Bahr A."/>
            <person name="Bloecker H."/>
            <person name="Heubner D."/>
            <person name="Hoerlein A."/>
            <person name="Michel G."/>
            <person name="Wedler H."/>
            <person name="Koehrer K."/>
            <person name="Ottenwaelder B."/>
            <person name="Poustka A."/>
            <person name="Wiemann S."/>
            <person name="Schupp I."/>
        </authorList>
    </citation>
    <scope>NUCLEOTIDE SEQUENCE [LARGE SCALE MRNA] OF 103-696 (ISOFORM 1)</scope>
    <source>
        <tissue>Testis</tissue>
    </source>
</reference>
<reference key="8">
    <citation type="journal article" date="2006" name="Cell">
        <title>Global, in vivo, and site-specific phosphorylation dynamics in signaling networks.</title>
        <authorList>
            <person name="Olsen J.V."/>
            <person name="Blagoev B."/>
            <person name="Gnad F."/>
            <person name="Macek B."/>
            <person name="Kumar C."/>
            <person name="Mortensen P."/>
            <person name="Mann M."/>
        </authorList>
    </citation>
    <scope>PHOSPHORYLATION [LARGE SCALE ANALYSIS] AT THR-690</scope>
    <scope>IDENTIFICATION BY MASS SPECTROMETRY [LARGE SCALE ANALYSIS]</scope>
    <source>
        <tissue>Cervix carcinoma</tissue>
    </source>
</reference>
<reference key="9">
    <citation type="journal article" date="2008" name="Proc. Natl. Acad. Sci. U.S.A.">
        <title>A quantitative atlas of mitotic phosphorylation.</title>
        <authorList>
            <person name="Dephoure N."/>
            <person name="Zhou C."/>
            <person name="Villen J."/>
            <person name="Beausoleil S.A."/>
            <person name="Bakalarski C.E."/>
            <person name="Elledge S.J."/>
            <person name="Gygi S.P."/>
        </authorList>
    </citation>
    <scope>PHOSPHORYLATION [LARGE SCALE ANALYSIS] AT SER-668 AND THR-690</scope>
    <scope>IDENTIFICATION BY MASS SPECTROMETRY [LARGE SCALE ANALYSIS]</scope>
    <source>
        <tissue>Cervix carcinoma</tissue>
    </source>
</reference>
<reference key="10">
    <citation type="journal article" date="2009" name="Anal. Chem.">
        <title>Lys-N and trypsin cover complementary parts of the phosphoproteome in a refined SCX-based approach.</title>
        <authorList>
            <person name="Gauci S."/>
            <person name="Helbig A.O."/>
            <person name="Slijper M."/>
            <person name="Krijgsveld J."/>
            <person name="Heck A.J."/>
            <person name="Mohammed S."/>
        </authorList>
    </citation>
    <scope>IDENTIFICATION BY MASS SPECTROMETRY [LARGE SCALE ANALYSIS]</scope>
</reference>
<reference key="11">
    <citation type="journal article" date="2010" name="Sci. Signal.">
        <title>Quantitative phosphoproteomics reveals widespread full phosphorylation site occupancy during mitosis.</title>
        <authorList>
            <person name="Olsen J.V."/>
            <person name="Vermeulen M."/>
            <person name="Santamaria A."/>
            <person name="Kumar C."/>
            <person name="Miller M.L."/>
            <person name="Jensen L.J."/>
            <person name="Gnad F."/>
            <person name="Cox J."/>
            <person name="Jensen T.S."/>
            <person name="Nigg E.A."/>
            <person name="Brunak S."/>
            <person name="Mann M."/>
        </authorList>
    </citation>
    <scope>PHOSPHORYLATION [LARGE SCALE ANALYSIS] AT THR-690</scope>
    <scope>IDENTIFICATION BY MASS SPECTROMETRY [LARGE SCALE ANALYSIS]</scope>
    <source>
        <tissue>Cervix carcinoma</tissue>
    </source>
</reference>
<reference key="12">
    <citation type="journal article" date="2013" name="Cell Rep.">
        <title>Inorganic phosphate export by the retrovirus receptor XPR1 in metazoans.</title>
        <authorList>
            <person name="Giovannini D."/>
            <person name="Touhami J."/>
            <person name="Charnet P."/>
            <person name="Sitbon M."/>
            <person name="Battini J.L."/>
        </authorList>
    </citation>
    <scope>FUNCTION</scope>
    <scope>TRANSPORTER ACTIVITY</scope>
    <scope>SUBCELLULAR LOCATION</scope>
</reference>
<reference key="13">
    <citation type="journal article" date="2013" name="J. Proteome Res.">
        <title>Toward a comprehensive characterization of a human cancer cell phosphoproteome.</title>
        <authorList>
            <person name="Zhou H."/>
            <person name="Di Palma S."/>
            <person name="Preisinger C."/>
            <person name="Peng M."/>
            <person name="Polat A.N."/>
            <person name="Heck A.J."/>
            <person name="Mohammed S."/>
        </authorList>
    </citation>
    <scope>PHOSPHORYLATION [LARGE SCALE ANALYSIS] AT SER-668</scope>
    <scope>IDENTIFICATION BY MASS SPECTROMETRY [LARGE SCALE ANALYSIS]</scope>
    <source>
        <tissue>Cervix carcinoma</tissue>
        <tissue>Erythroleukemia</tissue>
    </source>
</reference>
<reference key="14">
    <citation type="journal article" date="2015" name="Nat. Genet.">
        <title>Mutations in XPR1 cause primary familial brain calcification associated with altered phosphate export.</title>
        <authorList>
            <person name="Legati A."/>
            <person name="Giovannini D."/>
            <person name="Nicolas G."/>
            <person name="Lopez-Sanchez U."/>
            <person name="Quintans B."/>
            <person name="Oliveira J.R."/>
            <person name="Sears R.L."/>
            <person name="Ramos E.M."/>
            <person name="Spiteri E."/>
            <person name="Sobrido M.J."/>
            <person name="Carracedo A."/>
            <person name="Castro-Fernandez C."/>
            <person name="Cubizolle S."/>
            <person name="Fogel B.L."/>
            <person name="Goizet C."/>
            <person name="Jen J.C."/>
            <person name="Kirdlarp S."/>
            <person name="Lang A.E."/>
            <person name="Miedzybrodzka Z."/>
            <person name="Mitarnun W."/>
            <person name="Paucar M."/>
            <person name="Paulson H."/>
            <person name="Pariente J."/>
            <person name="Richard A.C."/>
            <person name="Salins N.S."/>
            <person name="Simpson S.A."/>
            <person name="Striano P."/>
            <person name="Svenningsson P."/>
            <person name="Tison F."/>
            <person name="Unni V.K."/>
            <person name="Vanakker O."/>
            <person name="Wessels M.W."/>
            <person name="Wetchaphanphesat S."/>
            <person name="Yang M."/>
            <person name="Boller F."/>
            <person name="Campion D."/>
            <person name="Hannequin D."/>
            <person name="Sitbon M."/>
            <person name="Geschwind D.H."/>
            <person name="Battini J.L."/>
            <person name="Coppola G."/>
        </authorList>
    </citation>
    <scope>FUNCTION</scope>
    <scope>TRANSPORTER ACTIVITY</scope>
    <scope>INVOLVEMENT IN IBGC6</scope>
    <scope>VARIANTS IBGC6 ASN-136; PRO-140; PRO-145 AND SER-218</scope>
    <scope>CHARACTERIZATION OF VARIANTS IBGC6 ASN-136; PRO-140; PRO-145 AND SER-218</scope>
</reference>
<reference key="15">
    <citation type="journal article" date="2019" name="Sci. Rep.">
        <title>Characterization of XPR1/SLC53A1 variants located outside of the SPX domain in patients with primary familial brain calcification.</title>
        <authorList>
            <person name="Lopez-Sanchez U."/>
            <person name="Nicolas G."/>
            <person name="Richard A.C."/>
            <person name="Maltete D."/>
            <person name="Charif M."/>
            <person name="Ayrignac X."/>
            <person name="Goizet C."/>
            <person name="Touhami J."/>
            <person name="Labesse G."/>
            <person name="Battini J.L."/>
            <person name="Sitbon M."/>
        </authorList>
    </citation>
    <scope>FUNCTION</scope>
    <scope>TRANSPORTER ACTIVITY</scope>
    <scope>SUBCELLULAR LOCATION</scope>
    <scope>INVOLVEMENT IN IBGC6</scope>
    <scope>VARIANTS IBGC6 CYS-459; ASP-619 AND SER-629</scope>
    <scope>CHARACTERIZATION OF VARIANTS IBGC6 CYS-459; ASP-619 AND SER-629</scope>
    <scope>MUTAGENESIS OF 612-LEU--THR-696</scope>
</reference>
<reference evidence="19" key="16">
    <citation type="journal article" date="2016" name="Science">
        <title>Control of eukaryotic phosphate homeostasis by inositol polyphosphate sensor domains.</title>
        <authorList>
            <person name="Wild R."/>
            <person name="Gerasimaite R."/>
            <person name="Jung J.Y."/>
            <person name="Truffault V."/>
            <person name="Pavlovic I."/>
            <person name="Schmidt A."/>
            <person name="Saiardi A."/>
            <person name="Jessen H.J."/>
            <person name="Poirier Y."/>
            <person name="Hothorn M."/>
            <person name="Mayer A."/>
        </authorList>
    </citation>
    <scope>X-RAY CRYSTALLOGRAPHY (2.43 ANGSTROMS) OF 1-207</scope>
    <scope>DOMAIN</scope>
    <scope>FUNCTION</scope>
</reference>
<reference evidence="20 21 22" key="17">
    <citation type="journal article" date="2024" name="Nature">
        <title>Human XPR1 structures reveal phosphate export mechanism.</title>
        <authorList>
            <person name="Yan R."/>
            <person name="Chen H."/>
            <person name="Liu C."/>
            <person name="Zhao J."/>
            <person name="Wu D."/>
            <person name="Jiang J."/>
            <person name="Gong J."/>
            <person name="Jiang D."/>
        </authorList>
    </citation>
    <scope>STRUCTURE BY ELECTRON MICROSCOPY (2.84 ANGSTROMS) IN COMPLEXES WITH PHOSPHATE AND INOSITOL HEXAKISPHOSPHATE</scope>
    <scope>FUNCTION</scope>
    <scope>TRANSPORTER ACTIVITY</scope>
    <scope>ACTIVITY REGULATION</scope>
    <scope>SUBCELLULAR LOCATION</scope>
    <scope>SUBUNIT</scope>
    <scope>DOMAIN</scope>
    <scope>TOPOLOGY</scope>
    <scope>MUTAGENESIS OF TYR-22; LYS-158; GLY-238; GLY-242; ARG-270; ARG-273; PHE-394; ASP-398; ARG-459; ARG-466; SER-497; ASP-533; ARG-570; TRP-573; THR-582; ARG-603; ARG-604; ARG-611 AND PHE-623</scope>
</reference>
<reference evidence="23 24 25 26 27 28 29 32" key="18">
    <citation type="journal article" date="2024" name="Science">
        <title>Structural basis for inositol pyrophosphate gating of the phosphate channel XPR1.</title>
        <authorList>
            <person name="Lu Y."/>
            <person name="Yue C.X."/>
            <person name="Zhang L."/>
            <person name="Yao D."/>
            <person name="Xia Y."/>
            <person name="Zhang Q."/>
            <person name="Zhang X."/>
            <person name="Li S."/>
            <person name="Shen Y."/>
            <person name="Cao M."/>
            <person name="Guo C.R."/>
            <person name="Qin A."/>
            <person name="Zhao J."/>
            <person name="Zhou L."/>
            <person name="Yu Y."/>
            <person name="Cao Y."/>
        </authorList>
    </citation>
    <scope>STRUCTURE BY ELECTRON MICROSCOPY (2.86 ANGSTROMS) OF 1-631 IN COMPLEX WITH INOSITOL HEXAKISPHOSPHATE</scope>
    <scope>FUNCTION</scope>
    <scope>TRANSPORTER ACTIVITY</scope>
    <scope>ACTIVITY REGULATION</scope>
    <scope>SUBCELLULAR LOCATION</scope>
    <scope>SUBUNIT</scope>
    <scope>DOMAIN</scope>
    <scope>TOPOLOGY</scope>
    <scope>MUTAGENESIS OF ARG-211; ARG-219; LYS-482; ARG-570; TRP-573; ARG-603 AND ARG-604</scope>
</reference>
<reference evidence="33 34 35 36" key="19">
    <citation type="journal article" date="2025" name="Nat. Commun.">
        <title>Structural insights into the mechanism of phosphate recognition and transport by XPR1.</title>
        <authorList>
            <person name="Zhang W."/>
            <person name="Chen Y."/>
            <person name="Guan Z."/>
            <person name="Wang Y."/>
            <person name="Tang M."/>
            <person name="Du Z."/>
            <person name="Zhang J."/>
            <person name="Cheng M."/>
            <person name="Zuo J."/>
            <person name="Liu Y."/>
            <person name="Wang Q."/>
            <person name="Liu Y."/>
            <person name="Zhang D."/>
            <person name="Yin P."/>
            <person name="Ma L."/>
            <person name="Liu Z."/>
        </authorList>
    </citation>
    <scope>STRUCTURE BY ELECTRON MICROSCOPY (2.90 ANGSTROMS) IN COMPLEX WITH PHOSPHATE</scope>
    <scope>FUNCTION</scope>
    <scope>TRANSPORTER ACTIVITY</scope>
    <scope>SUBCELLULAR LOCATION</scope>
    <scope>SUBUNIT</scope>
    <scope>TOPOLOGY</scope>
    <scope>MUTAGENESIS OF ARG-270; ASN-401; ARG-448; GLN-452; ARG-459; TYR-483; ARG-570; TRP-573; GLN-576; GLU-600 AND ARG-603</scope>
</reference>
<reference evidence="30 31" key="20">
    <citation type="journal article" date="2025" name="Nat. Commun.">
        <title>Structural basis of phosphate export by human XPR1.</title>
        <authorList>
            <person name="He Q."/>
            <person name="Zhang R."/>
            <person name="Tury S."/>
            <person name="Courgnaud V."/>
            <person name="Liu F."/>
            <person name="Battini J.L."/>
            <person name="Li B."/>
            <person name="Chen Q."/>
        </authorList>
    </citation>
    <scope>STRUCTURE BY ELECTRON MICROSCOPY (2.64 ANGSTROMS) IN COMPLEX WITH PHOSPHATE</scope>
    <scope>FUNCTION</scope>
    <scope>TRANSPORTER ACTIVITY</scope>
    <scope>SUBCELLULAR LOCATION</scope>
    <scope>SUBUNIT</scope>
    <scope>DOMAIN</scope>
    <scope>TOPOLOGY</scope>
    <scope>MUTAGENESIS OF LYS-158; LYS-161; LYS-165; PHE-235; LEU-239; LYS-482; ARG-570; TRP-573; ARG-603 AND ARG-604</scope>
</reference>
<evidence type="ECO:0000255" key="1">
    <source>
        <dbReference type="PROSITE-ProRule" id="PRU00712"/>
    </source>
</evidence>
<evidence type="ECO:0000256" key="2">
    <source>
        <dbReference type="SAM" id="MobiDB-lite"/>
    </source>
</evidence>
<evidence type="ECO:0000269" key="3">
    <source>
    </source>
</evidence>
<evidence type="ECO:0000269" key="4">
    <source>
    </source>
</evidence>
<evidence type="ECO:0000269" key="5">
    <source>
    </source>
</evidence>
<evidence type="ECO:0000269" key="6">
    <source>
    </source>
</evidence>
<evidence type="ECO:0000269" key="7">
    <source>
    </source>
</evidence>
<evidence type="ECO:0000269" key="8">
    <source>
    </source>
</evidence>
<evidence type="ECO:0000269" key="9">
    <source>
    </source>
</evidence>
<evidence type="ECO:0000269" key="10">
    <source>
    </source>
</evidence>
<evidence type="ECO:0000269" key="11">
    <source>
    </source>
</evidence>
<evidence type="ECO:0000269" key="12">
    <source>
    </source>
</evidence>
<evidence type="ECO:0000303" key="13">
    <source>
    </source>
</evidence>
<evidence type="ECO:0000303" key="14">
    <source>
    </source>
</evidence>
<evidence type="ECO:0000305" key="15"/>
<evidence type="ECO:0000305" key="16">
    <source>
    </source>
</evidence>
<evidence type="ECO:0000305" key="17">
    <source>
    </source>
</evidence>
<evidence type="ECO:0000305" key="18">
    <source>
    </source>
</evidence>
<evidence type="ECO:0007744" key="19">
    <source>
        <dbReference type="PDB" id="5IJH"/>
    </source>
</evidence>
<evidence type="ECO:0007744" key="20">
    <source>
        <dbReference type="PDB" id="8X5B"/>
    </source>
</evidence>
<evidence type="ECO:0007744" key="21">
    <source>
        <dbReference type="PDB" id="8X5E"/>
    </source>
</evidence>
<evidence type="ECO:0007744" key="22">
    <source>
        <dbReference type="PDB" id="8X5F"/>
    </source>
</evidence>
<evidence type="ECO:0007744" key="23">
    <source>
        <dbReference type="PDB" id="8YET"/>
    </source>
</evidence>
<evidence type="ECO:0007744" key="24">
    <source>
        <dbReference type="PDB" id="8YEX"/>
    </source>
</evidence>
<evidence type="ECO:0007744" key="25">
    <source>
        <dbReference type="PDB" id="8YF4"/>
    </source>
</evidence>
<evidence type="ECO:0007744" key="26">
    <source>
        <dbReference type="PDB" id="8YFD"/>
    </source>
</evidence>
<evidence type="ECO:0007744" key="27">
    <source>
        <dbReference type="PDB" id="8YFU"/>
    </source>
</evidence>
<evidence type="ECO:0007744" key="28">
    <source>
        <dbReference type="PDB" id="8YFW"/>
    </source>
</evidence>
<evidence type="ECO:0007744" key="29">
    <source>
        <dbReference type="PDB" id="8YFX"/>
    </source>
</evidence>
<evidence type="ECO:0007744" key="30">
    <source>
        <dbReference type="PDB" id="9IJY"/>
    </source>
</evidence>
<evidence type="ECO:0007744" key="31">
    <source>
        <dbReference type="PDB" id="9IJZ"/>
    </source>
</evidence>
<evidence type="ECO:0007744" key="32">
    <source>
        <dbReference type="PDB" id="9IWS"/>
    </source>
</evidence>
<evidence type="ECO:0007744" key="33">
    <source>
        <dbReference type="PDB" id="9J4X"/>
    </source>
</evidence>
<evidence type="ECO:0007744" key="34">
    <source>
        <dbReference type="PDB" id="9J51"/>
    </source>
</evidence>
<evidence type="ECO:0007744" key="35">
    <source>
        <dbReference type="PDB" id="9J52"/>
    </source>
</evidence>
<evidence type="ECO:0007744" key="36">
    <source>
        <dbReference type="PDB" id="9J53"/>
    </source>
</evidence>
<evidence type="ECO:0007744" key="37">
    <source>
    </source>
</evidence>
<evidence type="ECO:0007744" key="38">
    <source>
    </source>
</evidence>
<evidence type="ECO:0007744" key="39">
    <source>
    </source>
</evidence>
<evidence type="ECO:0007744" key="40">
    <source>
    </source>
</evidence>
<evidence type="ECO:0007829" key="41">
    <source>
        <dbReference type="PDB" id="5IJH"/>
    </source>
</evidence>
<evidence type="ECO:0007829" key="42">
    <source>
        <dbReference type="PDB" id="8TYU"/>
    </source>
</evidence>
<evidence type="ECO:0007829" key="43">
    <source>
        <dbReference type="PDB" id="8X5B"/>
    </source>
</evidence>
<evidence type="ECO:0007829" key="44">
    <source>
        <dbReference type="PDB" id="8X5F"/>
    </source>
</evidence>
<evidence type="ECO:0007829" key="45">
    <source>
        <dbReference type="PDB" id="9IWS"/>
    </source>
</evidence>
<evidence type="ECO:0007829" key="46">
    <source>
        <dbReference type="PDB" id="9J4X"/>
    </source>
</evidence>
<comment type="function">
    <text evidence="3 4 5 6 7 8 9 10">Inorganic ion transporter that mediates phosphate ion export across plasma membrane (PubMed:23791524, PubMed:25938945, PubMed:27080106, PubMed:31043717, PubMed:39169184, PubMed:39325866, PubMed:39747008, PubMed:39814721). Plays a major role in phosphate homeostasis, preventing intracellular phosphate accumulation and possible calcium phosphate precipitation, ultimately preserving calcium signaling (PubMed:27080106). Binds inositol hexakisphosphate (Ins6P) and similar inositol polyphosphates, such as 5-diphospho-inositol pentakisphosphate (5-InsP7), which are important intracellular signaling molecules involved in regulation of phosphate flux (PubMed:27080106, PubMed:39169184, PubMed:39325866).</text>
</comment>
<comment type="catalytic activity">
    <reaction evidence="3 4 6 7 8 9 10">
        <text>phosphate(in) = phosphate(out)</text>
        <dbReference type="Rhea" id="RHEA:32823"/>
        <dbReference type="ChEBI" id="CHEBI:43474"/>
    </reaction>
    <physiologicalReaction direction="left-to-right" evidence="16 17 18">
        <dbReference type="Rhea" id="RHEA:32824"/>
    </physiologicalReaction>
</comment>
<comment type="activity regulation">
    <text evidence="7 8">Allosterically activated by inositol hexakisphosphate (Ins6P).</text>
</comment>
<comment type="subunit">
    <text evidence="7 8 9 10">Homodimer.</text>
</comment>
<comment type="subcellular location">
    <subcellularLocation>
        <location evidence="3 6">Cell membrane</location>
        <topology evidence="7 8 9 10">Multi-pass membrane protein</topology>
    </subcellularLocation>
</comment>
<comment type="alternative products">
    <event type="alternative splicing"/>
    <isoform>
        <id>Q9UBH6-1</id>
        <name>1</name>
        <sequence type="displayed"/>
    </isoform>
    <isoform>
        <id>Q9UBH6-2</id>
        <name>2</name>
        <sequence type="described" ref="VSP_030748"/>
    </isoform>
</comment>
<comment type="tissue specificity">
    <text evidence="11 12">Widely expressed. Detected in spleen, lymph node, thymus, leukocytes, bone marrow, heart, kidney, pancreas and skeletal muscle.</text>
</comment>
<comment type="developmental stage">
    <text evidence="11 12">Expressed in fetal liver.</text>
</comment>
<comment type="domain">
    <text evidence="5 7 8 10">The SPX domain plays a role in the regulation of phosphate flux (PubMed:39169184, PubMed:39325866, PubMed:39814721). Inositol hexakisphosphate (Ins6P) is bound between two SPX domains of the homodimer (PubMed:39169184, PubMed:39325866). The SPX domain has high affinity for inositol polyphosphates and its affinity for inorganic phosphate is two to three orders of magnitude lower (PubMed:27080106).</text>
</comment>
<comment type="disease" evidence="4 6">
    <disease id="DI-04453">
        <name>Basal ganglia calcification, idiopathic, 6</name>
        <acronym>IBGC6</acronym>
        <description>A form of basal ganglia calcification, an autosomal dominant condition characterized by symmetric calcification in the basal ganglia and other brain regions. Affected individuals can either be asymptomatic or show a wide spectrum of neuropsychiatric symptoms, including parkinsonism, dystonia, tremor, ataxia, dementia, psychosis, seizures, and chronic headache. Serum levels of calcium, phosphate, alkaline phosphatase and parathyroid hormone are normal. The neuropathological hallmark of the disease is vascular and pericapillary calcification, mainly of calcium phosphate, in the affected brain areas.</description>
        <dbReference type="MIM" id="616413"/>
    </disease>
    <text>The disease is caused by variants affecting the gene represented in this entry.</text>
</comment>
<comment type="similarity">
    <text evidence="15">Belongs to the SYG1 (TC 2.A.94) family.</text>
</comment>
<comment type="caution">
    <text evidence="15">Confers susceptibility to xenotropic murine leukemia retrovirus (X-MLV) infection in vitro, but it is unclear whether its ability to act as a receptor for xenotropic and polytropic murine leukemia retroviruses is relevant in vivo and whether such viruses can infect human.</text>
</comment>
<proteinExistence type="evidence at protein level"/>
<name>S53A1_HUMAN</name>
<dbReference type="EMBL" id="AF115389">
    <property type="protein sequence ID" value="AAD17211.1"/>
    <property type="molecule type" value="mRNA"/>
</dbReference>
<dbReference type="EMBL" id="AF089744">
    <property type="protein sequence ID" value="AAD10196.1"/>
    <property type="molecule type" value="mRNA"/>
</dbReference>
<dbReference type="EMBL" id="AF099082">
    <property type="protein sequence ID" value="AAD08928.1"/>
    <property type="molecule type" value="mRNA"/>
</dbReference>
<dbReference type="EMBL" id="AL590085">
    <property type="status" value="NOT_ANNOTATED_CDS"/>
    <property type="molecule type" value="Genomic_DNA"/>
</dbReference>
<dbReference type="EMBL" id="AL162431">
    <property type="status" value="NOT_ANNOTATED_CDS"/>
    <property type="molecule type" value="Genomic_DNA"/>
</dbReference>
<dbReference type="EMBL" id="AL358434">
    <property type="status" value="NOT_ANNOTATED_CDS"/>
    <property type="molecule type" value="Genomic_DNA"/>
</dbReference>
<dbReference type="EMBL" id="CH471067">
    <property type="protein sequence ID" value="EAW91086.1"/>
    <property type="molecule type" value="Genomic_DNA"/>
</dbReference>
<dbReference type="EMBL" id="BC041142">
    <property type="protein sequence ID" value="AAH41142.1"/>
    <property type="molecule type" value="mRNA"/>
</dbReference>
<dbReference type="EMBL" id="AL133058">
    <property type="protein sequence ID" value="CAB61383.1"/>
    <property type="molecule type" value="mRNA"/>
</dbReference>
<dbReference type="EMBL" id="AL137583">
    <property type="protein sequence ID" value="CAB70825.1"/>
    <property type="molecule type" value="mRNA"/>
</dbReference>
<dbReference type="CCDS" id="CCDS1340.1">
    <molecule id="Q9UBH6-1"/>
</dbReference>
<dbReference type="CCDS" id="CCDS44284.1">
    <molecule id="Q9UBH6-2"/>
</dbReference>
<dbReference type="PIR" id="T42660">
    <property type="entry name" value="T42660"/>
</dbReference>
<dbReference type="RefSeq" id="NP_001129141.1">
    <molecule id="Q9UBH6-2"/>
    <property type="nucleotide sequence ID" value="NM_001135669.2"/>
</dbReference>
<dbReference type="RefSeq" id="NP_004727.2">
    <molecule id="Q9UBH6-1"/>
    <property type="nucleotide sequence ID" value="NM_004736.3"/>
</dbReference>
<dbReference type="PDB" id="5IJH">
    <property type="method" value="X-ray"/>
    <property type="resolution" value="2.43 A"/>
    <property type="chains" value="A/B=1-207"/>
</dbReference>
<dbReference type="PDB" id="8TYU">
    <property type="method" value="X-ray"/>
    <property type="resolution" value="1.40 A"/>
    <property type="chains" value="A/B=1-94, A/B=130-207"/>
</dbReference>
<dbReference type="PDB" id="8TYV">
    <property type="method" value="X-ray"/>
    <property type="resolution" value="1.85 A"/>
    <property type="chains" value="A/B=1-94, A/B=130-207"/>
</dbReference>
<dbReference type="PDB" id="8X5B">
    <property type="method" value="EM"/>
    <property type="resolution" value="2.84 A"/>
    <property type="chains" value="A/F=229-696"/>
</dbReference>
<dbReference type="PDB" id="8X5E">
    <property type="method" value="EM"/>
    <property type="resolution" value="3.61 A"/>
    <property type="chains" value="A=229-696"/>
</dbReference>
<dbReference type="PDB" id="8X5F">
    <property type="method" value="EM"/>
    <property type="resolution" value="2.96 A"/>
    <property type="chains" value="A/B=1-696"/>
</dbReference>
<dbReference type="PDB" id="8YET">
    <property type="method" value="EM"/>
    <property type="resolution" value="4.16 A"/>
    <property type="chains" value="A/B=1-620"/>
</dbReference>
<dbReference type="PDB" id="8YEX">
    <property type="method" value="EM"/>
    <property type="resolution" value="3.68 A"/>
    <property type="chains" value="A/B=228-619"/>
</dbReference>
<dbReference type="PDB" id="8YF4">
    <property type="method" value="EM"/>
    <property type="resolution" value="3.41 A"/>
    <property type="chains" value="A/B=227-619"/>
</dbReference>
<dbReference type="PDB" id="8YFD">
    <property type="method" value="EM"/>
    <property type="resolution" value="3.57 A"/>
    <property type="chains" value="A/B=227-622"/>
</dbReference>
<dbReference type="PDB" id="8YFU">
    <property type="method" value="EM"/>
    <property type="resolution" value="4.59 A"/>
    <property type="chains" value="A/B=21-620"/>
</dbReference>
<dbReference type="PDB" id="8YFW">
    <property type="method" value="EM"/>
    <property type="resolution" value="3.65 A"/>
    <property type="chains" value="A/B=21-620"/>
</dbReference>
<dbReference type="PDB" id="8YFX">
    <property type="method" value="EM"/>
    <property type="resolution" value="3.56 A"/>
    <property type="chains" value="A/B=227-622"/>
</dbReference>
<dbReference type="PDB" id="9IJY">
    <property type="method" value="EM"/>
    <property type="resolution" value="2.64 A"/>
    <property type="chains" value="A/B=1-696"/>
</dbReference>
<dbReference type="PDB" id="9IJZ">
    <property type="method" value="EM"/>
    <property type="resolution" value="2.91 A"/>
    <property type="chains" value="A/B=1-696"/>
</dbReference>
<dbReference type="PDB" id="9IWS">
    <property type="method" value="EM"/>
    <property type="resolution" value="2.86 A"/>
    <property type="chains" value="A/B=1-631"/>
</dbReference>
<dbReference type="PDB" id="9J4X">
    <property type="method" value="EM"/>
    <property type="resolution" value="2.90 A"/>
    <property type="chains" value="A/B=1-696"/>
</dbReference>
<dbReference type="PDB" id="9J51">
    <property type="method" value="EM"/>
    <property type="resolution" value="3.10 A"/>
    <property type="chains" value="A/B=1-696"/>
</dbReference>
<dbReference type="PDB" id="9J52">
    <property type="method" value="EM"/>
    <property type="resolution" value="3.10 A"/>
    <property type="chains" value="A/B=1-696"/>
</dbReference>
<dbReference type="PDB" id="9J53">
    <property type="method" value="EM"/>
    <property type="resolution" value="3.30 A"/>
    <property type="chains" value="A/B=1-696"/>
</dbReference>
<dbReference type="PDB" id="9J97">
    <property type="method" value="EM"/>
    <property type="resolution" value="3.30 A"/>
    <property type="chains" value="A/B=1-696"/>
</dbReference>
<dbReference type="PDB" id="9J98">
    <property type="method" value="EM"/>
    <property type="resolution" value="3.33 A"/>
    <property type="chains" value="A/B=1-696"/>
</dbReference>
<dbReference type="PDBsum" id="5IJH"/>
<dbReference type="PDBsum" id="8TYU"/>
<dbReference type="PDBsum" id="8TYV"/>
<dbReference type="PDBsum" id="8X5B"/>
<dbReference type="PDBsum" id="8X5E"/>
<dbReference type="PDBsum" id="8X5F"/>
<dbReference type="PDBsum" id="8YET"/>
<dbReference type="PDBsum" id="8YEX"/>
<dbReference type="PDBsum" id="8YF4"/>
<dbReference type="PDBsum" id="8YFD"/>
<dbReference type="PDBsum" id="8YFU"/>
<dbReference type="PDBsum" id="8YFW"/>
<dbReference type="PDBsum" id="8YFX"/>
<dbReference type="PDBsum" id="9IJY"/>
<dbReference type="PDBsum" id="9IJZ"/>
<dbReference type="PDBsum" id="9IWS"/>
<dbReference type="PDBsum" id="9J4X"/>
<dbReference type="PDBsum" id="9J51"/>
<dbReference type="PDBsum" id="9J52"/>
<dbReference type="PDBsum" id="9J53"/>
<dbReference type="PDBsum" id="9J97"/>
<dbReference type="PDBsum" id="9J98"/>
<dbReference type="EMDB" id="EMD-38065"/>
<dbReference type="EMDB" id="EMD-38067"/>
<dbReference type="EMDB" id="EMD-38068"/>
<dbReference type="EMDB" id="EMD-39203"/>
<dbReference type="EMDB" id="EMD-39204"/>
<dbReference type="EMDB" id="EMD-39210"/>
<dbReference type="EMDB" id="EMD-39220"/>
<dbReference type="EMDB" id="EMD-39230"/>
<dbReference type="EMDB" id="EMD-39231"/>
<dbReference type="EMDB" id="EMD-39232"/>
<dbReference type="EMDB" id="EMD-60645"/>
<dbReference type="EMDB" id="EMD-60646"/>
<dbReference type="EMDB" id="EMD-60962"/>
<dbReference type="EMDB" id="EMD-61138"/>
<dbReference type="EMDB" id="EMD-61139"/>
<dbReference type="EMDB" id="EMD-61140"/>
<dbReference type="EMDB" id="EMD-61141"/>
<dbReference type="SMR" id="Q9UBH6"/>
<dbReference type="BioGRID" id="114647">
    <property type="interactions" value="128"/>
</dbReference>
<dbReference type="FunCoup" id="Q9UBH6">
    <property type="interactions" value="2397"/>
</dbReference>
<dbReference type="IntAct" id="Q9UBH6">
    <property type="interactions" value="73"/>
</dbReference>
<dbReference type="MINT" id="Q9UBH6"/>
<dbReference type="STRING" id="9606.ENSP00000356562"/>
<dbReference type="TCDB" id="2.A.94.1.6">
    <property type="family name" value="the phosphate permease (pho1) family"/>
</dbReference>
<dbReference type="iPTMnet" id="Q9UBH6"/>
<dbReference type="PhosphoSitePlus" id="Q9UBH6"/>
<dbReference type="SwissPalm" id="Q9UBH6"/>
<dbReference type="BioMuta" id="XPR1"/>
<dbReference type="DMDM" id="74753221"/>
<dbReference type="jPOST" id="Q9UBH6"/>
<dbReference type="MassIVE" id="Q9UBH6"/>
<dbReference type="PaxDb" id="9606-ENSP00000356562"/>
<dbReference type="PeptideAtlas" id="Q9UBH6"/>
<dbReference type="ProteomicsDB" id="83970">
    <molecule id="Q9UBH6-1"/>
</dbReference>
<dbReference type="ProteomicsDB" id="83971">
    <molecule id="Q9UBH6-2"/>
</dbReference>
<dbReference type="Pumba" id="Q9UBH6"/>
<dbReference type="Antibodypedia" id="20589">
    <property type="antibodies" value="188 antibodies from 29 providers"/>
</dbReference>
<dbReference type="DNASU" id="9213"/>
<dbReference type="Ensembl" id="ENST00000367589.3">
    <molecule id="Q9UBH6-2"/>
    <property type="protein sequence ID" value="ENSP00000356561.3"/>
    <property type="gene ID" value="ENSG00000143324.14"/>
</dbReference>
<dbReference type="Ensembl" id="ENST00000367590.9">
    <molecule id="Q9UBH6-1"/>
    <property type="protein sequence ID" value="ENSP00000356562.4"/>
    <property type="gene ID" value="ENSG00000143324.14"/>
</dbReference>
<dbReference type="GeneID" id="9213"/>
<dbReference type="KEGG" id="hsa:9213"/>
<dbReference type="MANE-Select" id="ENST00000367590.9">
    <property type="protein sequence ID" value="ENSP00000356562.4"/>
    <property type="RefSeq nucleotide sequence ID" value="NM_004736.4"/>
    <property type="RefSeq protein sequence ID" value="NP_004727.2"/>
</dbReference>
<dbReference type="UCSC" id="uc001goi.4">
    <molecule id="Q9UBH6-1"/>
    <property type="organism name" value="human"/>
</dbReference>
<dbReference type="AGR" id="HGNC:12827"/>
<dbReference type="CTD" id="9213"/>
<dbReference type="DisGeNET" id="9213"/>
<dbReference type="GeneCards" id="XPR1"/>
<dbReference type="GeneReviews" id="XPR1"/>
<dbReference type="HGNC" id="HGNC:12827">
    <property type="gene designation" value="XPR1"/>
</dbReference>
<dbReference type="HPA" id="ENSG00000143324">
    <property type="expression patterns" value="Low tissue specificity"/>
</dbReference>
<dbReference type="MalaCards" id="XPR1"/>
<dbReference type="MIM" id="605237">
    <property type="type" value="gene"/>
</dbReference>
<dbReference type="MIM" id="616413">
    <property type="type" value="phenotype"/>
</dbReference>
<dbReference type="neXtProt" id="NX_Q9UBH6"/>
<dbReference type="OpenTargets" id="ENSG00000143324"/>
<dbReference type="Orphanet" id="1980">
    <property type="disease" value="Bilateral striopallidodentate calcinosis"/>
</dbReference>
<dbReference type="PharmGKB" id="PA37420"/>
<dbReference type="VEuPathDB" id="HostDB:ENSG00000143324"/>
<dbReference type="eggNOG" id="KOG1162">
    <property type="taxonomic scope" value="Eukaryota"/>
</dbReference>
<dbReference type="GeneTree" id="ENSGT00500000044895"/>
<dbReference type="HOGENOM" id="CLU_006116_3_0_1"/>
<dbReference type="InParanoid" id="Q9UBH6"/>
<dbReference type="OMA" id="ETSHFYT"/>
<dbReference type="OrthoDB" id="9970435at2759"/>
<dbReference type="PAN-GO" id="Q9UBH6">
    <property type="GO annotations" value="7 GO annotations based on evolutionary models"/>
</dbReference>
<dbReference type="PhylomeDB" id="Q9UBH6"/>
<dbReference type="TreeFam" id="TF314643"/>
<dbReference type="PathwayCommons" id="Q9UBH6"/>
<dbReference type="SignaLink" id="Q9UBH6"/>
<dbReference type="BioGRID-ORCS" id="9213">
    <property type="hits" value="63 hits in 1164 CRISPR screens"/>
</dbReference>
<dbReference type="ChiTaRS" id="XPR1">
    <property type="organism name" value="human"/>
</dbReference>
<dbReference type="GenomeRNAi" id="9213"/>
<dbReference type="Pharos" id="Q9UBH6">
    <property type="development level" value="Tbio"/>
</dbReference>
<dbReference type="PRO" id="PR:Q9UBH6"/>
<dbReference type="Proteomes" id="UP000005640">
    <property type="component" value="Chromosome 1"/>
</dbReference>
<dbReference type="RNAct" id="Q9UBH6">
    <property type="molecule type" value="protein"/>
</dbReference>
<dbReference type="Bgee" id="ENSG00000143324">
    <property type="expression patterns" value="Expressed in cortical plate and 192 other cell types or tissues"/>
</dbReference>
<dbReference type="ExpressionAtlas" id="Q9UBH6">
    <property type="expression patterns" value="baseline and differential"/>
</dbReference>
<dbReference type="GO" id="GO:0005886">
    <property type="term" value="C:plasma membrane"/>
    <property type="evidence" value="ECO:0000314"/>
    <property type="project" value="UniProtKB"/>
</dbReference>
<dbReference type="GO" id="GO:0015562">
    <property type="term" value="F:efflux transmembrane transporter activity"/>
    <property type="evidence" value="ECO:0000315"/>
    <property type="project" value="UniProtKB"/>
</dbReference>
<dbReference type="GO" id="GO:0000822">
    <property type="term" value="F:inositol hexakisphosphate binding"/>
    <property type="evidence" value="ECO:0000314"/>
    <property type="project" value="UniProtKB"/>
</dbReference>
<dbReference type="GO" id="GO:0005315">
    <property type="term" value="F:phosphate transmembrane transporter activity"/>
    <property type="evidence" value="ECO:0000315"/>
    <property type="project" value="UniProtKB"/>
</dbReference>
<dbReference type="GO" id="GO:0001618">
    <property type="term" value="F:virus receptor activity"/>
    <property type="evidence" value="ECO:0007669"/>
    <property type="project" value="Ensembl"/>
</dbReference>
<dbReference type="GO" id="GO:0016036">
    <property type="term" value="P:cellular response to phosphate starvation"/>
    <property type="evidence" value="ECO:0000318"/>
    <property type="project" value="GO_Central"/>
</dbReference>
<dbReference type="GO" id="GO:0030643">
    <property type="term" value="P:intracellular phosphate ion homeostasis"/>
    <property type="evidence" value="ECO:0000315"/>
    <property type="project" value="UniProtKB"/>
</dbReference>
<dbReference type="GO" id="GO:0035435">
    <property type="term" value="P:phosphate ion transmembrane transport"/>
    <property type="evidence" value="ECO:0000315"/>
    <property type="project" value="UniProtKB"/>
</dbReference>
<dbReference type="GO" id="GO:0006817">
    <property type="term" value="P:phosphate ion transport"/>
    <property type="evidence" value="ECO:0000318"/>
    <property type="project" value="GO_Central"/>
</dbReference>
<dbReference type="GO" id="GO:0009615">
    <property type="term" value="P:response to virus"/>
    <property type="evidence" value="ECO:0007669"/>
    <property type="project" value="Ensembl"/>
</dbReference>
<dbReference type="CDD" id="cd14477">
    <property type="entry name" value="SPX_XPR1_like"/>
    <property type="match status" value="1"/>
</dbReference>
<dbReference type="InterPro" id="IPR004342">
    <property type="entry name" value="EXS_C"/>
</dbReference>
<dbReference type="InterPro" id="IPR004331">
    <property type="entry name" value="SPX_dom"/>
</dbReference>
<dbReference type="PANTHER" id="PTHR10783:SF103">
    <property type="entry name" value="SOLUTE CARRIER FAMILY 53 MEMBER 1"/>
    <property type="match status" value="1"/>
</dbReference>
<dbReference type="PANTHER" id="PTHR10783">
    <property type="entry name" value="XENOTROPIC AND POLYTROPIC RETROVIRUS RECEPTOR 1-RELATED"/>
    <property type="match status" value="1"/>
</dbReference>
<dbReference type="Pfam" id="PF03124">
    <property type="entry name" value="EXS"/>
    <property type="match status" value="1"/>
</dbReference>
<dbReference type="Pfam" id="PF03105">
    <property type="entry name" value="SPX"/>
    <property type="match status" value="3"/>
</dbReference>
<dbReference type="PROSITE" id="PS51380">
    <property type="entry name" value="EXS"/>
    <property type="match status" value="1"/>
</dbReference>
<dbReference type="PROSITE" id="PS51382">
    <property type="entry name" value="SPX"/>
    <property type="match status" value="1"/>
</dbReference>
<organism>
    <name type="scientific">Homo sapiens</name>
    <name type="common">Human</name>
    <dbReference type="NCBI Taxonomy" id="9606"/>
    <lineage>
        <taxon>Eukaryota</taxon>
        <taxon>Metazoa</taxon>
        <taxon>Chordata</taxon>
        <taxon>Craniata</taxon>
        <taxon>Vertebrata</taxon>
        <taxon>Euteleostomi</taxon>
        <taxon>Mammalia</taxon>
        <taxon>Eutheria</taxon>
        <taxon>Euarchontoglires</taxon>
        <taxon>Primates</taxon>
        <taxon>Haplorrhini</taxon>
        <taxon>Catarrhini</taxon>
        <taxon>Hominidae</taxon>
        <taxon>Homo</taxon>
    </lineage>
</organism>
<keyword id="KW-0002">3D-structure</keyword>
<keyword id="KW-0025">Alternative splicing</keyword>
<keyword id="KW-1003">Cell membrane</keyword>
<keyword id="KW-0225">Disease variant</keyword>
<keyword id="KW-0472">Membrane</keyword>
<keyword id="KW-0597">Phosphoprotein</keyword>
<keyword id="KW-1267">Proteomics identification</keyword>
<keyword id="KW-1185">Reference proteome</keyword>
<keyword id="KW-0812">Transmembrane</keyword>
<keyword id="KW-1133">Transmembrane helix</keyword>
<protein>
    <recommendedName>
        <fullName evidence="14">Solute carrier family 53 member 1</fullName>
    </recommendedName>
    <alternativeName>
        <fullName evidence="18">Phosphate exporter SLC53A1</fullName>
    </alternativeName>
    <alternativeName>
        <fullName>Protein SYG1 homolog</fullName>
    </alternativeName>
    <alternativeName>
        <fullName>Xenotropic and polytropic murine leukemia virus receptor X3</fullName>
        <shortName>X-receptor</shortName>
    </alternativeName>
    <alternativeName>
        <fullName>Xenotropic and polytropic retrovirus receptor 1</fullName>
    </alternativeName>
</protein>